<proteinExistence type="inferred from homology"/>
<organism>
    <name type="scientific">Paracoccus denitrificans</name>
    <dbReference type="NCBI Taxonomy" id="266"/>
    <lineage>
        <taxon>Bacteria</taxon>
        <taxon>Pseudomonadati</taxon>
        <taxon>Pseudomonadota</taxon>
        <taxon>Alphaproteobacteria</taxon>
        <taxon>Rhodobacterales</taxon>
        <taxon>Paracoccaceae</taxon>
        <taxon>Paracoccus</taxon>
    </lineage>
</organism>
<evidence type="ECO:0000250" key="1"/>
<evidence type="ECO:0000305" key="2"/>
<feature type="chain" id="PRO_0000132119" description="Small ribosomal subunit protein uS13">
    <location>
        <begin position="1"/>
        <end position="17" status="greater than"/>
    </location>
</feature>
<feature type="non-terminal residue">
    <location>
        <position position="17"/>
    </location>
</feature>
<accession>P72180</accession>
<dbReference type="EMBL" id="U64204">
    <property type="protein sequence ID" value="AAB06329.1"/>
    <property type="status" value="ALT_INIT"/>
    <property type="molecule type" value="Genomic_DNA"/>
</dbReference>
<dbReference type="GO" id="GO:1990904">
    <property type="term" value="C:ribonucleoprotein complex"/>
    <property type="evidence" value="ECO:0007669"/>
    <property type="project" value="UniProtKB-KW"/>
</dbReference>
<dbReference type="GO" id="GO:0005840">
    <property type="term" value="C:ribosome"/>
    <property type="evidence" value="ECO:0007669"/>
    <property type="project" value="UniProtKB-KW"/>
</dbReference>
<dbReference type="GO" id="GO:0019843">
    <property type="term" value="F:rRNA binding"/>
    <property type="evidence" value="ECO:0007669"/>
    <property type="project" value="UniProtKB-KW"/>
</dbReference>
<dbReference type="GO" id="GO:0000049">
    <property type="term" value="F:tRNA binding"/>
    <property type="evidence" value="ECO:0007669"/>
    <property type="project" value="UniProtKB-KW"/>
</dbReference>
<comment type="function">
    <text evidence="1">Located at the top of the head of the 30S subunit, it contacts several helices of the 16S rRNA. In the 70S ribosome it contacts the 23S rRNA (bridge B1a) and protein L5 of the 50S subunit (bridge B1b), connecting the 2 subunits; these bridges are implicated in subunit movement. Contacts the tRNAs in the A and P-sites (By similarity).</text>
</comment>
<comment type="subunit">
    <text evidence="1">Part of the 30S ribosomal subunit. Forms a loose heterodimer with protein S19. Forms two bridges to the 50S subunit in the 70S ribosome (By similarity).</text>
</comment>
<comment type="similarity">
    <text evidence="2">Belongs to the universal ribosomal protein uS13 family.</text>
</comment>
<comment type="sequence caution" evidence="2">
    <conflict type="erroneous initiation">
        <sequence resource="EMBL-CDS" id="AAB06329"/>
    </conflict>
</comment>
<sequence length="17" mass="1793">MARIAGVNIPTGKRVPI</sequence>
<name>RS13_PARDE</name>
<gene>
    <name type="primary">rpsM</name>
</gene>
<reference key="1">
    <citation type="journal article" date="1998" name="Protein Eng.">
        <title>Metal chelating properties of adenylate kinase from Paracoccus denitrificans.</title>
        <authorList>
            <person name="Perrier V."/>
            <person name="Burlacu-Miron S."/>
            <person name="Boussac A."/>
            <person name="Meier A."/>
            <person name="Gilles A.M."/>
        </authorList>
    </citation>
    <scope>NUCLEOTIDE SEQUENCE [GENOMIC DNA]</scope>
    <source>
        <strain>ATCC 17741 / DSM 413 / NBRC 16712 / NCCB 22021 / NCIMB 11627</strain>
    </source>
</reference>
<protein>
    <recommendedName>
        <fullName evidence="2">Small ribosomal subunit protein uS13</fullName>
    </recommendedName>
    <alternativeName>
        <fullName>30S ribosomal protein S13</fullName>
    </alternativeName>
</protein>
<keyword id="KW-0687">Ribonucleoprotein</keyword>
<keyword id="KW-0689">Ribosomal protein</keyword>
<keyword id="KW-0694">RNA-binding</keyword>
<keyword id="KW-0699">rRNA-binding</keyword>
<keyword id="KW-0820">tRNA-binding</keyword>